<comment type="function">
    <text evidence="2">Catalyzes the hydrolytic cleavage of the carbon-nitrogen bond in imidazolone-5-propanoate to yield N-formimidoyl-L-glutamate. It is the third step in the universal histidine degradation pathway.</text>
</comment>
<comment type="catalytic activity">
    <reaction evidence="2">
        <text>4-imidazolone-5-propanoate + H2O = N-formimidoyl-L-glutamate</text>
        <dbReference type="Rhea" id="RHEA:23660"/>
        <dbReference type="ChEBI" id="CHEBI:15377"/>
        <dbReference type="ChEBI" id="CHEBI:58928"/>
        <dbReference type="ChEBI" id="CHEBI:77893"/>
        <dbReference type="EC" id="3.5.2.7"/>
    </reaction>
</comment>
<comment type="catalytic activity">
    <reaction>
        <text>L-histidine = trans-urocanate + NH4(+)</text>
        <dbReference type="Rhea" id="RHEA:21232"/>
        <dbReference type="ChEBI" id="CHEBI:17771"/>
        <dbReference type="ChEBI" id="CHEBI:28938"/>
        <dbReference type="ChEBI" id="CHEBI:57595"/>
        <dbReference type="EC" id="4.3.1.3"/>
    </reaction>
</comment>
<comment type="cofactor">
    <cofactor evidence="2">
        <name>Zn(2+)</name>
        <dbReference type="ChEBI" id="CHEBI:29105"/>
    </cofactor>
    <cofactor evidence="2">
        <name>Fe(3+)</name>
        <dbReference type="ChEBI" id="CHEBI:29034"/>
    </cofactor>
    <text evidence="2">Binds 1 zinc or iron ion per subunit.</text>
</comment>
<comment type="pathway">
    <text>Amino-acid degradation; L-histidine degradation into L-glutamate; N-formimidoyl-L-glutamate from L-histidine: step 1/3.</text>
</comment>
<comment type="pathway">
    <text evidence="2">Amino-acid degradation; L-histidine degradation into L-glutamate; N-formimidoyl-L-glutamate from L-histidine: step 3/3.</text>
</comment>
<comment type="subcellular location">
    <subcellularLocation>
        <location evidence="3">Cytoplasm</location>
    </subcellularLocation>
</comment>
<comment type="PTM">
    <text evidence="1">Contains an active site 4-methylidene-imidazol-5-one (MIO), which is formed autocatalytically by cyclization and dehydration of residues Ala-Ser-Gly.</text>
</comment>
<comment type="similarity">
    <text evidence="3">In the N-terminal section; belongs to the metallo-dependent hydrolases superfamily. HutI family.</text>
</comment>
<comment type="similarity">
    <text evidence="3">In the C-terminal section; belongs to the PAL/histidase family.</text>
</comment>
<comment type="sequence caution" evidence="3">
    <conflict type="frameshift">
        <sequence resource="EMBL-CDS" id="AAL53610"/>
    </conflict>
</comment>
<reference key="1">
    <citation type="journal article" date="2002" name="Proc. Natl. Acad. Sci. U.S.A.">
        <title>The genome sequence of the facultative intracellular pathogen Brucella melitensis.</title>
        <authorList>
            <person name="DelVecchio V.G."/>
            <person name="Kapatral V."/>
            <person name="Redkar R.J."/>
            <person name="Patra G."/>
            <person name="Mujer C."/>
            <person name="Los T."/>
            <person name="Ivanova N."/>
            <person name="Anderson I."/>
            <person name="Bhattacharyya A."/>
            <person name="Lykidis A."/>
            <person name="Reznik G."/>
            <person name="Jablonski L."/>
            <person name="Larsen N."/>
            <person name="D'Souza M."/>
            <person name="Bernal A."/>
            <person name="Mazur M."/>
            <person name="Goltsman E."/>
            <person name="Selkov E."/>
            <person name="Elzer P.H."/>
            <person name="Hagius S."/>
            <person name="O'Callaghan D."/>
            <person name="Letesson J.-J."/>
            <person name="Haselkorn R."/>
            <person name="Kyrpides N.C."/>
            <person name="Overbeek R."/>
        </authorList>
    </citation>
    <scope>NUCLEOTIDE SEQUENCE [LARGE SCALE GENOMIC DNA]</scope>
    <source>
        <strain>ATCC 23456 / CCUG 17765 / NCTC 10094 / 16M</strain>
    </source>
</reference>
<dbReference type="EC" id="3.5.2.7"/>
<dbReference type="EC" id="4.3.1.3"/>
<dbReference type="EMBL" id="AE008918">
    <property type="protein sequence ID" value="AAL53610.1"/>
    <property type="status" value="ALT_FRAME"/>
    <property type="molecule type" value="Genomic_DNA"/>
</dbReference>
<dbReference type="PIR" id="AG3555">
    <property type="entry name" value="AG3555"/>
</dbReference>
<dbReference type="KEGG" id="bme:BMEII0368"/>
<dbReference type="eggNOG" id="COG1228">
    <property type="taxonomic scope" value="Bacteria"/>
</dbReference>
<dbReference type="eggNOG" id="COG2986">
    <property type="taxonomic scope" value="Bacteria"/>
</dbReference>
<dbReference type="UniPathway" id="UPA00379">
    <property type="reaction ID" value="UER00549"/>
</dbReference>
<dbReference type="UniPathway" id="UPA00379">
    <property type="reaction ID" value="UER00551"/>
</dbReference>
<dbReference type="Proteomes" id="UP000000419">
    <property type="component" value="Chromosome II"/>
</dbReference>
<dbReference type="GO" id="GO:0005737">
    <property type="term" value="C:cytoplasm"/>
    <property type="evidence" value="ECO:0007669"/>
    <property type="project" value="UniProtKB-SubCell"/>
</dbReference>
<dbReference type="GO" id="GO:0004397">
    <property type="term" value="F:histidine ammonia-lyase activity"/>
    <property type="evidence" value="ECO:0007669"/>
    <property type="project" value="UniProtKB-UniRule"/>
</dbReference>
<dbReference type="GO" id="GO:0050480">
    <property type="term" value="F:imidazolonepropionase activity"/>
    <property type="evidence" value="ECO:0007669"/>
    <property type="project" value="UniProtKB-UniRule"/>
</dbReference>
<dbReference type="GO" id="GO:0005506">
    <property type="term" value="F:iron ion binding"/>
    <property type="evidence" value="ECO:0007669"/>
    <property type="project" value="UniProtKB-UniRule"/>
</dbReference>
<dbReference type="GO" id="GO:0008270">
    <property type="term" value="F:zinc ion binding"/>
    <property type="evidence" value="ECO:0007669"/>
    <property type="project" value="UniProtKB-UniRule"/>
</dbReference>
<dbReference type="GO" id="GO:0019556">
    <property type="term" value="P:L-histidine catabolic process to glutamate and formamide"/>
    <property type="evidence" value="ECO:0007669"/>
    <property type="project" value="UniProtKB-UniPathway"/>
</dbReference>
<dbReference type="GO" id="GO:0019557">
    <property type="term" value="P:L-histidine catabolic process to glutamate and formate"/>
    <property type="evidence" value="ECO:0007669"/>
    <property type="project" value="UniProtKB-UniPathway"/>
</dbReference>
<dbReference type="CDD" id="cd01296">
    <property type="entry name" value="Imidazolone-5PH"/>
    <property type="match status" value="1"/>
</dbReference>
<dbReference type="CDD" id="cd00332">
    <property type="entry name" value="PAL-HAL"/>
    <property type="match status" value="1"/>
</dbReference>
<dbReference type="FunFam" id="1.10.275.10:FF:000005">
    <property type="entry name" value="Histidine ammonia-lyase"/>
    <property type="match status" value="1"/>
</dbReference>
<dbReference type="FunFam" id="1.20.200.10:FF:000003">
    <property type="entry name" value="Histidine ammonia-lyase"/>
    <property type="match status" value="1"/>
</dbReference>
<dbReference type="FunFam" id="3.20.20.140:FF:000007">
    <property type="entry name" value="Imidazolonepropionase"/>
    <property type="match status" value="1"/>
</dbReference>
<dbReference type="Gene3D" id="1.20.200.10">
    <property type="entry name" value="Fumarase/aspartase (Central domain)"/>
    <property type="match status" value="1"/>
</dbReference>
<dbReference type="Gene3D" id="1.10.275.10">
    <property type="entry name" value="Fumarase/aspartase (N-terminal domain)"/>
    <property type="match status" value="1"/>
</dbReference>
<dbReference type="Gene3D" id="3.20.20.140">
    <property type="entry name" value="Metal-dependent hydrolases"/>
    <property type="match status" value="1"/>
</dbReference>
<dbReference type="Gene3D" id="2.30.40.10">
    <property type="entry name" value="Urease, subunit C, domain 1"/>
    <property type="match status" value="1"/>
</dbReference>
<dbReference type="HAMAP" id="MF_00229">
    <property type="entry name" value="His_ammonia_lyase"/>
    <property type="match status" value="1"/>
</dbReference>
<dbReference type="HAMAP" id="MF_00372">
    <property type="entry name" value="HutI"/>
    <property type="match status" value="1"/>
</dbReference>
<dbReference type="InterPro" id="IPR006680">
    <property type="entry name" value="Amidohydro-rel"/>
</dbReference>
<dbReference type="InterPro" id="IPR001106">
    <property type="entry name" value="Aromatic_Lyase"/>
</dbReference>
<dbReference type="InterPro" id="IPR024083">
    <property type="entry name" value="Fumarase/histidase_N"/>
</dbReference>
<dbReference type="InterPro" id="IPR005921">
    <property type="entry name" value="HutH"/>
</dbReference>
<dbReference type="InterPro" id="IPR005920">
    <property type="entry name" value="HutI"/>
</dbReference>
<dbReference type="InterPro" id="IPR008948">
    <property type="entry name" value="L-Aspartase-like"/>
</dbReference>
<dbReference type="InterPro" id="IPR011059">
    <property type="entry name" value="Metal-dep_hydrolase_composite"/>
</dbReference>
<dbReference type="InterPro" id="IPR032466">
    <property type="entry name" value="Metal_Hydrolase"/>
</dbReference>
<dbReference type="InterPro" id="IPR022313">
    <property type="entry name" value="Phe/His_NH3-lyase_AS"/>
</dbReference>
<dbReference type="NCBIfam" id="TIGR01225">
    <property type="entry name" value="hutH"/>
    <property type="match status" value="1"/>
</dbReference>
<dbReference type="NCBIfam" id="TIGR01224">
    <property type="entry name" value="hutI"/>
    <property type="match status" value="1"/>
</dbReference>
<dbReference type="NCBIfam" id="NF006871">
    <property type="entry name" value="PRK09367.1"/>
    <property type="match status" value="1"/>
</dbReference>
<dbReference type="PANTHER" id="PTHR42752">
    <property type="entry name" value="IMIDAZOLONEPROPIONASE"/>
    <property type="match status" value="1"/>
</dbReference>
<dbReference type="PANTHER" id="PTHR42752:SF1">
    <property type="entry name" value="IMIDAZOLONEPROPIONASE-RELATED"/>
    <property type="match status" value="1"/>
</dbReference>
<dbReference type="Pfam" id="PF01979">
    <property type="entry name" value="Amidohydro_1"/>
    <property type="match status" value="1"/>
</dbReference>
<dbReference type="Pfam" id="PF00221">
    <property type="entry name" value="Lyase_aromatic"/>
    <property type="match status" value="1"/>
</dbReference>
<dbReference type="SUPFAM" id="SSF51338">
    <property type="entry name" value="Composite domain of metallo-dependent hydrolases"/>
    <property type="match status" value="1"/>
</dbReference>
<dbReference type="SUPFAM" id="SSF48557">
    <property type="entry name" value="L-aspartase-like"/>
    <property type="match status" value="1"/>
</dbReference>
<dbReference type="SUPFAM" id="SSF51556">
    <property type="entry name" value="Metallo-dependent hydrolases"/>
    <property type="match status" value="1"/>
</dbReference>
<dbReference type="PROSITE" id="PS00488">
    <property type="entry name" value="PAL_HISTIDASE"/>
    <property type="match status" value="1"/>
</dbReference>
<accession>Q8YD09</accession>
<sequence length="925" mass="97849">MTKNSSTVFTHARIATLEEKAANLGLIEEAALVVKDARIVYAGPENKLPDEYASFEKIDCGNRLITPGLIDCHTHLVHAGNRAHEFELRLQGATYEEVARAGGGIVSSVRNLRAASEDDLVRETLPRLDALIAEGVTTVEVKSGYGLDRDSEIKSLKAARRLGEERDVAIRTTFLGAHALPPEMNGDKAAYIDRVINDMLPAIAEQGLADAVDGFCEGIAFLPDEIARVFDAAKAHDIPVKLHADQLSNLHGAALAASYGALSADHLEYTDADGAAAMASAGTVAVLLPGAYYFIRETQKPPVEAFRAAGTKMALATDNNPGTSPLTSLLLTMNMGATLFRMTVEECIAGVTREAARALGILDQTGTLEIGKDADLAIWDIERPAELVYRIGFNPLWKRVFKGQIKPHVRMEPFMTIILKPGSVPLETLEKIYREGLPVRIDPAFHAGIEKAAARIAEIAAGDAPVYGINTGFGKLASIRIAAGDVATLQRNLILSHCCGVGEPLSENIVRLIMALKLVSLGRGASGVQLEVITLIEAMLEKGVIPMIPEKGSVGASGDLAPLAHMTAAMIGEGEAFYRGERLSGAKALGKAGLKPVVLAAKEGLALINGTQTSTALALAGLFRAHRAARTALITGALSTDAAMGSDAPFHEEIHQLRGHKGQIDAGRALRTLLEGSAIRRSHLEGDQRVQDPYCXRCQPQVDGACLDILRQAARTLEIEANAVTDNPLVLSDGRAVSGGNFHAEPVAFAADQIALAVCEIGAISQRRIALLVDPSLSFGLPAFLARKPGLNSGLMIAEVTSAALMSENKQMAHPASVDSTPTSANQEDHVSMACHGARRLLQMTANLNAIIGIEALTGALGVELRKPLTTSAELAKVIAALRAKVATLEEDRYMADDLKAAAELVADGTLSGVISAGILPDLEA</sequence>
<organism>
    <name type="scientific">Brucella melitensis biotype 1 (strain ATCC 23456 / CCUG 17765 / NCTC 10094 / 16M)</name>
    <dbReference type="NCBI Taxonomy" id="224914"/>
    <lineage>
        <taxon>Bacteria</taxon>
        <taxon>Pseudomonadati</taxon>
        <taxon>Pseudomonadota</taxon>
        <taxon>Alphaproteobacteria</taxon>
        <taxon>Hyphomicrobiales</taxon>
        <taxon>Brucellaceae</taxon>
        <taxon>Brucella/Ochrobactrum group</taxon>
        <taxon>Brucella</taxon>
    </lineage>
</organism>
<name>HUTIH_BRUME</name>
<gene>
    <name type="primary">hutIH</name>
    <name type="ordered locus">BMEII0368</name>
</gene>
<keyword id="KW-0963">Cytoplasm</keyword>
<keyword id="KW-0369">Histidine metabolism</keyword>
<keyword id="KW-0378">Hydrolase</keyword>
<keyword id="KW-0408">Iron</keyword>
<keyword id="KW-0456">Lyase</keyword>
<keyword id="KW-0479">Metal-binding</keyword>
<keyword id="KW-0511">Multifunctional enzyme</keyword>
<keyword id="KW-0862">Zinc</keyword>
<proteinExistence type="inferred from homology"/>
<protein>
    <recommendedName>
        <fullName>Bifunctional imidazolonepropionase/histidine ammonia-lyase</fullName>
    </recommendedName>
    <domain>
        <recommendedName>
            <fullName>Imidazolonepropionase</fullName>
            <ecNumber>3.5.2.7</ecNumber>
        </recommendedName>
        <alternativeName>
            <fullName>Imidazolone-5-propionate hydrolase</fullName>
        </alternativeName>
    </domain>
    <domain>
        <recommendedName>
            <fullName>Histidine ammonia-lyase</fullName>
            <shortName>Histidase</shortName>
            <ecNumber>4.3.1.3</ecNumber>
        </recommendedName>
    </domain>
</protein>
<feature type="chain" id="PRO_0000160981" description="Bifunctional imidazolonepropionase/histidine ammonia-lyase">
    <location>
        <begin position="1"/>
        <end position="925"/>
    </location>
</feature>
<feature type="region of interest" description="Imidazolonepropionase">
    <location>
        <begin position="1"/>
        <end position="414"/>
    </location>
</feature>
<feature type="region of interest" description="Histidine ammonia-lyase">
    <location>
        <begin position="415"/>
        <end position="925"/>
    </location>
</feature>
<feature type="binding site" evidence="2">
    <location>
        <position position="73"/>
    </location>
    <ligand>
        <name>Fe(3+)</name>
        <dbReference type="ChEBI" id="CHEBI:29034"/>
    </ligand>
</feature>
<feature type="binding site" evidence="2">
    <location>
        <position position="73"/>
    </location>
    <ligand>
        <name>Zn(2+)</name>
        <dbReference type="ChEBI" id="CHEBI:29105"/>
    </ligand>
</feature>
<feature type="binding site" evidence="2">
    <location>
        <position position="75"/>
    </location>
    <ligand>
        <name>Fe(3+)</name>
        <dbReference type="ChEBI" id="CHEBI:29034"/>
    </ligand>
</feature>
<feature type="binding site" evidence="2">
    <location>
        <position position="75"/>
    </location>
    <ligand>
        <name>Zn(2+)</name>
        <dbReference type="ChEBI" id="CHEBI:29105"/>
    </ligand>
</feature>
<feature type="binding site" evidence="2">
    <location>
        <position position="82"/>
    </location>
    <ligand>
        <name>4-imidazolone-5-propanoate</name>
        <dbReference type="ChEBI" id="CHEBI:77893"/>
    </ligand>
</feature>
<feature type="binding site" evidence="2">
    <location>
        <position position="145"/>
    </location>
    <ligand>
        <name>4-imidazolone-5-propanoate</name>
        <dbReference type="ChEBI" id="CHEBI:77893"/>
    </ligand>
</feature>
<feature type="binding site" evidence="2">
    <location>
        <position position="145"/>
    </location>
    <ligand>
        <name>N-formimidoyl-L-glutamate</name>
        <dbReference type="ChEBI" id="CHEBI:58928"/>
    </ligand>
</feature>
<feature type="binding site" evidence="2">
    <location>
        <position position="178"/>
    </location>
    <ligand>
        <name>4-imidazolone-5-propanoate</name>
        <dbReference type="ChEBI" id="CHEBI:77893"/>
    </ligand>
</feature>
<feature type="binding site" evidence="2">
    <location>
        <position position="243"/>
    </location>
    <ligand>
        <name>Fe(3+)</name>
        <dbReference type="ChEBI" id="CHEBI:29034"/>
    </ligand>
</feature>
<feature type="binding site" evidence="2">
    <location>
        <position position="243"/>
    </location>
    <ligand>
        <name>Zn(2+)</name>
        <dbReference type="ChEBI" id="CHEBI:29105"/>
    </ligand>
</feature>
<feature type="binding site" evidence="2">
    <location>
        <position position="246"/>
    </location>
    <ligand>
        <name>4-imidazolone-5-propanoate</name>
        <dbReference type="ChEBI" id="CHEBI:77893"/>
    </ligand>
</feature>
<feature type="binding site" evidence="2">
    <location>
        <position position="318"/>
    </location>
    <ligand>
        <name>Fe(3+)</name>
        <dbReference type="ChEBI" id="CHEBI:29034"/>
    </ligand>
</feature>
<feature type="binding site" evidence="2">
    <location>
        <position position="318"/>
    </location>
    <ligand>
        <name>Zn(2+)</name>
        <dbReference type="ChEBI" id="CHEBI:29105"/>
    </ligand>
</feature>
<feature type="binding site" evidence="2">
    <location>
        <position position="320"/>
    </location>
    <ligand>
        <name>N-formimidoyl-L-glutamate</name>
        <dbReference type="ChEBI" id="CHEBI:58928"/>
    </ligand>
</feature>
<feature type="binding site" evidence="2">
    <location>
        <position position="322"/>
    </location>
    <ligand>
        <name>N-formimidoyl-L-glutamate</name>
        <dbReference type="ChEBI" id="CHEBI:58928"/>
    </ligand>
</feature>
<feature type="binding site" evidence="2">
    <location>
        <position position="323"/>
    </location>
    <ligand>
        <name>4-imidazolone-5-propanoate</name>
        <dbReference type="ChEBI" id="CHEBI:77893"/>
    </ligand>
</feature>
<feature type="modified residue" description="2,3-didehydroalanine (Ser)" evidence="1">
    <location>
        <position position="557"/>
    </location>
</feature>
<feature type="cross-link" description="5-imidazolinone (Ala-Gly)" evidence="1">
    <location>
        <begin position="556"/>
        <end position="558"/>
    </location>
</feature>
<evidence type="ECO:0000250" key="1"/>
<evidence type="ECO:0000255" key="2">
    <source>
        <dbReference type="HAMAP-Rule" id="MF_00372"/>
    </source>
</evidence>
<evidence type="ECO:0000305" key="3"/>